<accession>Q8A4V8</accession>
<keyword id="KW-1185">Reference proteome</keyword>
<keyword id="KW-0687">Ribonucleoprotein</keyword>
<keyword id="KW-0689">Ribosomal protein</keyword>
<sequence length="117" mass="13170">MDLIKIAEEAFATGKQHPSFKAGDTVTVAYRIIEGNKERVQLYRGVVIKIAGHGDKKRFTVRKMSGTVGVERIFPIESPAIDSIEVNKVGKVRRAKLYYLRALTGKKARIKEKRVNN</sequence>
<comment type="function">
    <text evidence="1">This protein is located at the 30S-50S ribosomal subunit interface and may play a role in the structure and function of the aminoacyl-tRNA binding site.</text>
</comment>
<comment type="similarity">
    <text evidence="1">Belongs to the bacterial ribosomal protein bL19 family.</text>
</comment>
<feature type="chain" id="PRO_0000163414" description="Large ribosomal subunit protein bL19">
    <location>
        <begin position="1"/>
        <end position="117"/>
    </location>
</feature>
<organism>
    <name type="scientific">Bacteroides thetaiotaomicron (strain ATCC 29148 / DSM 2079 / JCM 5827 / CCUG 10774 / NCTC 10582 / VPI-5482 / E50)</name>
    <dbReference type="NCBI Taxonomy" id="226186"/>
    <lineage>
        <taxon>Bacteria</taxon>
        <taxon>Pseudomonadati</taxon>
        <taxon>Bacteroidota</taxon>
        <taxon>Bacteroidia</taxon>
        <taxon>Bacteroidales</taxon>
        <taxon>Bacteroidaceae</taxon>
        <taxon>Bacteroides</taxon>
    </lineage>
</organism>
<evidence type="ECO:0000255" key="1">
    <source>
        <dbReference type="HAMAP-Rule" id="MF_00402"/>
    </source>
</evidence>
<evidence type="ECO:0000305" key="2"/>
<protein>
    <recommendedName>
        <fullName evidence="1">Large ribosomal subunit protein bL19</fullName>
    </recommendedName>
    <alternativeName>
        <fullName evidence="2">50S ribosomal protein L19</fullName>
    </alternativeName>
</protein>
<gene>
    <name evidence="1" type="primary">rplS</name>
    <name type="ordered locus">BT_2489</name>
</gene>
<proteinExistence type="inferred from homology"/>
<reference key="1">
    <citation type="journal article" date="2003" name="Science">
        <title>A genomic view of the human-Bacteroides thetaiotaomicron symbiosis.</title>
        <authorList>
            <person name="Xu J."/>
            <person name="Bjursell M.K."/>
            <person name="Himrod J."/>
            <person name="Deng S."/>
            <person name="Carmichael L.K."/>
            <person name="Chiang H.C."/>
            <person name="Hooper L.V."/>
            <person name="Gordon J.I."/>
        </authorList>
    </citation>
    <scope>NUCLEOTIDE SEQUENCE [LARGE SCALE GENOMIC DNA]</scope>
    <source>
        <strain>ATCC 29148 / DSM 2079 / JCM 5827 / CCUG 10774 / NCTC 10582 / VPI-5482 / E50</strain>
    </source>
</reference>
<dbReference type="EMBL" id="AE015928">
    <property type="protein sequence ID" value="AAO77596.1"/>
    <property type="molecule type" value="Genomic_DNA"/>
</dbReference>
<dbReference type="RefSeq" id="NP_811402.1">
    <property type="nucleotide sequence ID" value="NC_004663.1"/>
</dbReference>
<dbReference type="RefSeq" id="WP_005675578.1">
    <property type="nucleotide sequence ID" value="NZ_UYXG01000043.1"/>
</dbReference>
<dbReference type="SMR" id="Q8A4V8"/>
<dbReference type="FunCoup" id="Q8A4V8">
    <property type="interactions" value="627"/>
</dbReference>
<dbReference type="STRING" id="226186.BT_2489"/>
<dbReference type="PaxDb" id="226186-BT_2489"/>
<dbReference type="EnsemblBacteria" id="AAO77596">
    <property type="protein sequence ID" value="AAO77596"/>
    <property type="gene ID" value="BT_2489"/>
</dbReference>
<dbReference type="GeneID" id="75111400"/>
<dbReference type="KEGG" id="bth:BT_2489"/>
<dbReference type="PATRIC" id="fig|226186.12.peg.2542"/>
<dbReference type="eggNOG" id="COG0335">
    <property type="taxonomic scope" value="Bacteria"/>
</dbReference>
<dbReference type="HOGENOM" id="CLU_103507_2_2_10"/>
<dbReference type="InParanoid" id="Q8A4V8"/>
<dbReference type="OrthoDB" id="9803541at2"/>
<dbReference type="Proteomes" id="UP000001414">
    <property type="component" value="Chromosome"/>
</dbReference>
<dbReference type="GO" id="GO:0022625">
    <property type="term" value="C:cytosolic large ribosomal subunit"/>
    <property type="evidence" value="ECO:0000318"/>
    <property type="project" value="GO_Central"/>
</dbReference>
<dbReference type="GO" id="GO:0003735">
    <property type="term" value="F:structural constituent of ribosome"/>
    <property type="evidence" value="ECO:0000318"/>
    <property type="project" value="GO_Central"/>
</dbReference>
<dbReference type="GO" id="GO:0006412">
    <property type="term" value="P:translation"/>
    <property type="evidence" value="ECO:0007669"/>
    <property type="project" value="UniProtKB-UniRule"/>
</dbReference>
<dbReference type="FunFam" id="2.30.30.790:FF:000001">
    <property type="entry name" value="50S ribosomal protein L19"/>
    <property type="match status" value="1"/>
</dbReference>
<dbReference type="Gene3D" id="2.30.30.790">
    <property type="match status" value="1"/>
</dbReference>
<dbReference type="HAMAP" id="MF_00402">
    <property type="entry name" value="Ribosomal_bL19"/>
    <property type="match status" value="1"/>
</dbReference>
<dbReference type="InterPro" id="IPR001857">
    <property type="entry name" value="Ribosomal_bL19"/>
</dbReference>
<dbReference type="InterPro" id="IPR018257">
    <property type="entry name" value="Ribosomal_bL19_CS"/>
</dbReference>
<dbReference type="InterPro" id="IPR038657">
    <property type="entry name" value="Ribosomal_bL19_sf"/>
</dbReference>
<dbReference type="InterPro" id="IPR008991">
    <property type="entry name" value="Translation_prot_SH3-like_sf"/>
</dbReference>
<dbReference type="NCBIfam" id="TIGR01024">
    <property type="entry name" value="rplS_bact"/>
    <property type="match status" value="1"/>
</dbReference>
<dbReference type="PANTHER" id="PTHR15680:SF9">
    <property type="entry name" value="LARGE RIBOSOMAL SUBUNIT PROTEIN BL19M"/>
    <property type="match status" value="1"/>
</dbReference>
<dbReference type="PANTHER" id="PTHR15680">
    <property type="entry name" value="RIBOSOMAL PROTEIN L19"/>
    <property type="match status" value="1"/>
</dbReference>
<dbReference type="Pfam" id="PF01245">
    <property type="entry name" value="Ribosomal_L19"/>
    <property type="match status" value="1"/>
</dbReference>
<dbReference type="PIRSF" id="PIRSF002191">
    <property type="entry name" value="Ribosomal_L19"/>
    <property type="match status" value="1"/>
</dbReference>
<dbReference type="PRINTS" id="PR00061">
    <property type="entry name" value="RIBOSOMALL19"/>
</dbReference>
<dbReference type="SUPFAM" id="SSF50104">
    <property type="entry name" value="Translation proteins SH3-like domain"/>
    <property type="match status" value="1"/>
</dbReference>
<dbReference type="PROSITE" id="PS01015">
    <property type="entry name" value="RIBOSOMAL_L19"/>
    <property type="match status" value="1"/>
</dbReference>
<name>RL19_BACTN</name>